<keyword id="KW-0963">Cytoplasm</keyword>
<keyword id="KW-0539">Nucleus</keyword>
<keyword id="KW-0653">Protein transport</keyword>
<keyword id="KW-1185">Reference proteome</keyword>
<keyword id="KW-0813">Transport</keyword>
<comment type="function">
    <text evidence="1">Acts as an adapter for the XPO1/CRM1-mediated export of the 60S ribosomal subunit.</text>
</comment>
<comment type="subunit">
    <text evidence="1">Associates with pre-60S ribosomal particles.</text>
</comment>
<comment type="subcellular location">
    <subcellularLocation>
        <location evidence="1">Cytoplasm</location>
    </subcellularLocation>
    <subcellularLocation>
        <location evidence="1">Nucleus</location>
    </subcellularLocation>
    <text evidence="1">Shuttles between the nucleus/nucleolus and the cytoplasm in a XPO1/CRM1-dependent manner.</text>
</comment>
<comment type="similarity">
    <text evidence="2">Belongs to the NMD3 family.</text>
</comment>
<accession>Q6GNS3</accession>
<proteinExistence type="evidence at transcript level"/>
<organism>
    <name type="scientific">Xenopus laevis</name>
    <name type="common">African clawed frog</name>
    <dbReference type="NCBI Taxonomy" id="8355"/>
    <lineage>
        <taxon>Eukaryota</taxon>
        <taxon>Metazoa</taxon>
        <taxon>Chordata</taxon>
        <taxon>Craniata</taxon>
        <taxon>Vertebrata</taxon>
        <taxon>Euteleostomi</taxon>
        <taxon>Amphibia</taxon>
        <taxon>Batrachia</taxon>
        <taxon>Anura</taxon>
        <taxon>Pipoidea</taxon>
        <taxon>Pipidae</taxon>
        <taxon>Xenopodinae</taxon>
        <taxon>Xenopus</taxon>
        <taxon>Xenopus</taxon>
    </lineage>
</organism>
<name>NMD3_XENLA</name>
<protein>
    <recommendedName>
        <fullName>60S ribosomal export protein NMD3</fullName>
    </recommendedName>
</protein>
<feature type="chain" id="PRO_0000323565" description="60S ribosomal export protein NMD3">
    <location>
        <begin position="1"/>
        <end position="504"/>
    </location>
</feature>
<dbReference type="EMBL" id="BC073430">
    <property type="protein sequence ID" value="AAH73430.1"/>
    <property type="molecule type" value="mRNA"/>
</dbReference>
<dbReference type="RefSeq" id="NP_001085853.1">
    <property type="nucleotide sequence ID" value="NM_001092384.1"/>
</dbReference>
<dbReference type="SMR" id="Q6GNS3"/>
<dbReference type="BioGRID" id="102443">
    <property type="interactions" value="1"/>
</dbReference>
<dbReference type="IntAct" id="Q6GNS3">
    <property type="interactions" value="1"/>
</dbReference>
<dbReference type="DNASU" id="444280"/>
<dbReference type="GeneID" id="444280"/>
<dbReference type="KEGG" id="xla:444280"/>
<dbReference type="AGR" id="Xenbase:XB-GENE-942235"/>
<dbReference type="CTD" id="444280"/>
<dbReference type="Xenbase" id="XB-GENE-942235">
    <property type="gene designation" value="nmd3.L"/>
</dbReference>
<dbReference type="OMA" id="VILVRKH"/>
<dbReference type="OrthoDB" id="203821at2759"/>
<dbReference type="Proteomes" id="UP000186698">
    <property type="component" value="Chromosome 5L"/>
</dbReference>
<dbReference type="Bgee" id="444280">
    <property type="expression patterns" value="Expressed in ovary and 19 other cell types or tissues"/>
</dbReference>
<dbReference type="GO" id="GO:0005737">
    <property type="term" value="C:cytoplasm"/>
    <property type="evidence" value="ECO:0000318"/>
    <property type="project" value="GO_Central"/>
</dbReference>
<dbReference type="GO" id="GO:0005634">
    <property type="term" value="C:nucleus"/>
    <property type="evidence" value="ECO:0000318"/>
    <property type="project" value="GO_Central"/>
</dbReference>
<dbReference type="GO" id="GO:0043023">
    <property type="term" value="F:ribosomal large subunit binding"/>
    <property type="evidence" value="ECO:0000318"/>
    <property type="project" value="GO_Central"/>
</dbReference>
<dbReference type="GO" id="GO:0015031">
    <property type="term" value="P:protein transport"/>
    <property type="evidence" value="ECO:0007669"/>
    <property type="project" value="UniProtKB-KW"/>
</dbReference>
<dbReference type="GO" id="GO:0000055">
    <property type="term" value="P:ribosomal large subunit export from nucleus"/>
    <property type="evidence" value="ECO:0000318"/>
    <property type="project" value="GO_Central"/>
</dbReference>
<dbReference type="InterPro" id="IPR039768">
    <property type="entry name" value="Nmd3"/>
</dbReference>
<dbReference type="InterPro" id="IPR007064">
    <property type="entry name" value="Nmd3_N"/>
</dbReference>
<dbReference type="InterPro" id="IPR048898">
    <property type="entry name" value="NMD3_OB"/>
</dbReference>
<dbReference type="InterPro" id="IPR048899">
    <property type="entry name" value="NMD_SH3"/>
</dbReference>
<dbReference type="PANTHER" id="PTHR12746:SF2">
    <property type="entry name" value="60S RIBOSOMAL EXPORT PROTEIN NMD3"/>
    <property type="match status" value="1"/>
</dbReference>
<dbReference type="PANTHER" id="PTHR12746">
    <property type="entry name" value="NONSENSE-MEDIATED MRNA DECAY PROTEIN 3"/>
    <property type="match status" value="1"/>
</dbReference>
<dbReference type="Pfam" id="PF04981">
    <property type="entry name" value="NMD3"/>
    <property type="match status" value="1"/>
</dbReference>
<dbReference type="Pfam" id="PF21192">
    <property type="entry name" value="NMD3_OB"/>
    <property type="match status" value="1"/>
</dbReference>
<dbReference type="Pfam" id="PF21193">
    <property type="entry name" value="NMD_SH3"/>
    <property type="match status" value="1"/>
</dbReference>
<sequence length="504" mass="58098">MEYMKGPATSSQGNILCCQCGIPIPPNPANMCVACLRTQVDISEGIPKQVSVHFCKQCERYLQPPGTWIQCALESRELLTLCLKKLKANLSKVRLIDAGFIWTEPHSKRLKVKLTIQKEVMNGAILQQVFVVDYVVQAQMCDDCHRVEAKDFWKAVVQVRQKVLHKKTFYYLEQTILKHRLHQNTLRVKEIHDGLDFYYASKQHGQKMVEFLQCTVPCRFKASQRLISHDIHTNAYNYKSTFSVEIVPVCKDNLVCLSPKLAQSLGNMNQICICARVTSTIHLIDPSTLQIAEVDGNTYWRYPFNSLFHPKQMEEFIVMDTEIIRDRKQAAGAGMRSNKHVLAEVWVQKTSEMNTTQQYHCRTHLGHLLNPGDLVLGFDLSNCNLNDEFINKMNPHHIPDVVLIKKSYDRARRQRRRNWKLKEMDRDREGMDTDDERQYQDFLEDLEEDELLRKNVNIFKNANVPVESDTDEEGAPRISLAEMLEDLHISQDATGEEGAGMLTE</sequence>
<reference key="1">
    <citation type="submission" date="2004-06" db="EMBL/GenBank/DDBJ databases">
        <authorList>
            <consortium name="NIH - Xenopus Gene Collection (XGC) project"/>
        </authorList>
    </citation>
    <scope>NUCLEOTIDE SEQUENCE [LARGE SCALE MRNA]</scope>
    <source>
        <tissue>Embryo</tissue>
    </source>
</reference>
<gene>
    <name type="primary">nmd3</name>
    <name type="synonym">nmd3l</name>
</gene>
<evidence type="ECO:0000250" key="1">
    <source>
        <dbReference type="UniProtKB" id="Q96D46"/>
    </source>
</evidence>
<evidence type="ECO:0000305" key="2"/>